<keyword id="KW-0053">Apoptosis</keyword>
<keyword id="KW-0067">ATP-binding</keyword>
<keyword id="KW-0131">Cell cycle</keyword>
<keyword id="KW-0963">Cytoplasm</keyword>
<keyword id="KW-0227">DNA damage</keyword>
<keyword id="KW-0418">Kinase</keyword>
<keyword id="KW-0460">Magnesium</keyword>
<keyword id="KW-0464">Manganese</keyword>
<keyword id="KW-0479">Metal-binding</keyword>
<keyword id="KW-0547">Nucleotide-binding</keyword>
<keyword id="KW-0539">Nucleus</keyword>
<keyword id="KW-0597">Phosphoprotein</keyword>
<keyword id="KW-1185">Reference proteome</keyword>
<keyword id="KW-0723">Serine/threonine-protein kinase</keyword>
<keyword id="KW-0808">Transferase</keyword>
<keyword id="KW-0043">Tumor suppressor</keyword>
<organism>
    <name type="scientific">Xenopus laevis</name>
    <name type="common">African clawed frog</name>
    <dbReference type="NCBI Taxonomy" id="8355"/>
    <lineage>
        <taxon>Eukaryota</taxon>
        <taxon>Metazoa</taxon>
        <taxon>Chordata</taxon>
        <taxon>Craniata</taxon>
        <taxon>Vertebrata</taxon>
        <taxon>Euteleostomi</taxon>
        <taxon>Amphibia</taxon>
        <taxon>Batrachia</taxon>
        <taxon>Anura</taxon>
        <taxon>Pipoidea</taxon>
        <taxon>Pipidae</taxon>
        <taxon>Xenopodinae</taxon>
        <taxon>Xenopus</taxon>
        <taxon>Xenopus</taxon>
    </lineage>
</organism>
<name>STK11_XENLA</name>
<proteinExistence type="evidence at protein level"/>
<feature type="chain" id="PRO_0000086700" description="Serine/threonine-protein kinase stk11">
    <location>
        <begin position="1"/>
        <end position="432"/>
    </location>
</feature>
<feature type="domain" description="Protein kinase" evidence="4">
    <location>
        <begin position="52"/>
        <end position="312"/>
    </location>
</feature>
<feature type="region of interest" description="Disordered" evidence="6">
    <location>
        <begin position="398"/>
        <end position="432"/>
    </location>
</feature>
<feature type="compositionally biased region" description="Polar residues" evidence="6">
    <location>
        <begin position="409"/>
        <end position="421"/>
    </location>
</feature>
<feature type="compositionally biased region" description="Basic residues" evidence="6">
    <location>
        <begin position="422"/>
        <end position="432"/>
    </location>
</feature>
<feature type="active site" description="Proton acceptor" evidence="4 5">
    <location>
        <position position="179"/>
    </location>
</feature>
<feature type="binding site" evidence="4">
    <location>
        <begin position="58"/>
        <end position="66"/>
    </location>
    <ligand>
        <name>ATP</name>
        <dbReference type="ChEBI" id="CHEBI:30616"/>
    </ligand>
</feature>
<feature type="binding site">
    <location>
        <position position="81"/>
    </location>
    <ligand>
        <name>ATP</name>
        <dbReference type="ChEBI" id="CHEBI:30616"/>
    </ligand>
</feature>
<feature type="modified residue" description="Phosphothreonine; by autocatalysis" evidence="7">
    <location>
        <position position="192"/>
    </location>
</feature>
<feature type="modified residue" description="Phosphoserine; by PKA" evidence="3">
    <location>
        <position position="427"/>
    </location>
</feature>
<feature type="mutagenesis site" description="Loss of activity." evidence="7">
    <original>K</original>
    <variation>I</variation>
    <location>
        <position position="81"/>
    </location>
</feature>
<feature type="mutagenesis site" description="Loss of autophosphorylation." evidence="7">
    <original>T</original>
    <variation>A</variation>
    <location>
        <position position="192"/>
    </location>
</feature>
<dbReference type="EC" id="2.7.11.1" evidence="2"/>
<dbReference type="EMBL" id="U24435">
    <property type="protein sequence ID" value="AAC59904.1"/>
    <property type="molecule type" value="mRNA"/>
</dbReference>
<dbReference type="EMBL" id="BC077243">
    <property type="protein sequence ID" value="AAH77243.1"/>
    <property type="molecule type" value="mRNA"/>
</dbReference>
<dbReference type="RefSeq" id="NP_001083758.1">
    <property type="nucleotide sequence ID" value="NM_001090289.1"/>
</dbReference>
<dbReference type="SMR" id="Q91604"/>
<dbReference type="BioGRID" id="100426">
    <property type="interactions" value="1"/>
</dbReference>
<dbReference type="IntAct" id="Q91604">
    <property type="interactions" value="1"/>
</dbReference>
<dbReference type="iPTMnet" id="Q91604"/>
<dbReference type="DNASU" id="399100"/>
<dbReference type="GeneID" id="399100"/>
<dbReference type="KEGG" id="xla:399100"/>
<dbReference type="AGR" id="Xenbase:XB-GENE-955285"/>
<dbReference type="CTD" id="399100"/>
<dbReference type="Xenbase" id="XB-GENE-955285">
    <property type="gene designation" value="stk11.L"/>
</dbReference>
<dbReference type="OMA" id="AYHYGSE"/>
<dbReference type="OrthoDB" id="68483at2759"/>
<dbReference type="BRENDA" id="2.7.11.1">
    <property type="organism ID" value="6725"/>
</dbReference>
<dbReference type="Proteomes" id="UP000186698">
    <property type="component" value="Chromosome 1L"/>
</dbReference>
<dbReference type="Bgee" id="399100">
    <property type="expression patterns" value="Expressed in ovary and 19 other cell types or tissues"/>
</dbReference>
<dbReference type="GO" id="GO:0005737">
    <property type="term" value="C:cytoplasm"/>
    <property type="evidence" value="ECO:0000250"/>
    <property type="project" value="UniProtKB"/>
</dbReference>
<dbReference type="GO" id="GO:0005829">
    <property type="term" value="C:cytosol"/>
    <property type="evidence" value="ECO:0000250"/>
    <property type="project" value="UniProtKB"/>
</dbReference>
<dbReference type="GO" id="GO:0016020">
    <property type="term" value="C:membrane"/>
    <property type="evidence" value="ECO:0000250"/>
    <property type="project" value="UniProtKB"/>
</dbReference>
<dbReference type="GO" id="GO:0005739">
    <property type="term" value="C:mitochondrion"/>
    <property type="evidence" value="ECO:0000250"/>
    <property type="project" value="UniProtKB"/>
</dbReference>
<dbReference type="GO" id="GO:0005634">
    <property type="term" value="C:nucleus"/>
    <property type="evidence" value="ECO:0007669"/>
    <property type="project" value="UniProtKB-SubCell"/>
</dbReference>
<dbReference type="GO" id="GO:0005524">
    <property type="term" value="F:ATP binding"/>
    <property type="evidence" value="ECO:0007669"/>
    <property type="project" value="UniProtKB-KW"/>
</dbReference>
<dbReference type="GO" id="GO:0046872">
    <property type="term" value="F:metal ion binding"/>
    <property type="evidence" value="ECO:0007669"/>
    <property type="project" value="UniProtKB-KW"/>
</dbReference>
<dbReference type="GO" id="GO:0002039">
    <property type="term" value="F:p53 binding"/>
    <property type="evidence" value="ECO:0000250"/>
    <property type="project" value="UniProtKB"/>
</dbReference>
<dbReference type="GO" id="GO:0030295">
    <property type="term" value="F:protein kinase activator activity"/>
    <property type="evidence" value="ECO:0000250"/>
    <property type="project" value="UniProtKB"/>
</dbReference>
<dbReference type="GO" id="GO:0106310">
    <property type="term" value="F:protein serine kinase activity"/>
    <property type="evidence" value="ECO:0007669"/>
    <property type="project" value="RHEA"/>
</dbReference>
<dbReference type="GO" id="GO:0004674">
    <property type="term" value="F:protein serine/threonine kinase activity"/>
    <property type="evidence" value="ECO:0000318"/>
    <property type="project" value="GO_Central"/>
</dbReference>
<dbReference type="GO" id="GO:0006974">
    <property type="term" value="P:DNA damage response"/>
    <property type="evidence" value="ECO:0007669"/>
    <property type="project" value="UniProtKB-KW"/>
</dbReference>
<dbReference type="GO" id="GO:0030010">
    <property type="term" value="P:establishment of cell polarity"/>
    <property type="evidence" value="ECO:0000250"/>
    <property type="project" value="UniProtKB"/>
</dbReference>
<dbReference type="GO" id="GO:0042593">
    <property type="term" value="P:glucose homeostasis"/>
    <property type="evidence" value="ECO:0000250"/>
    <property type="project" value="UniProtKB"/>
</dbReference>
<dbReference type="GO" id="GO:0035556">
    <property type="term" value="P:intracellular signal transduction"/>
    <property type="evidence" value="ECO:0000318"/>
    <property type="project" value="GO_Central"/>
</dbReference>
<dbReference type="GO" id="GO:0072332">
    <property type="term" value="P:intrinsic apoptotic signaling pathway by p53 class mediator"/>
    <property type="evidence" value="ECO:0000250"/>
    <property type="project" value="UniProtKB"/>
</dbReference>
<dbReference type="GO" id="GO:0030308">
    <property type="term" value="P:negative regulation of cell growth"/>
    <property type="evidence" value="ECO:0000250"/>
    <property type="project" value="UniProtKB"/>
</dbReference>
<dbReference type="GO" id="GO:0046777">
    <property type="term" value="P:protein autophosphorylation"/>
    <property type="evidence" value="ECO:0000250"/>
    <property type="project" value="UniProtKB"/>
</dbReference>
<dbReference type="GO" id="GO:0001558">
    <property type="term" value="P:regulation of cell growth"/>
    <property type="evidence" value="ECO:0000250"/>
    <property type="project" value="UniProtKB"/>
</dbReference>
<dbReference type="GO" id="GO:0010212">
    <property type="term" value="P:response to ionizing radiation"/>
    <property type="evidence" value="ECO:0000250"/>
    <property type="project" value="UniProtKB"/>
</dbReference>
<dbReference type="GO" id="GO:0001944">
    <property type="term" value="P:vasculature development"/>
    <property type="evidence" value="ECO:0000250"/>
    <property type="project" value="UniProtKB"/>
</dbReference>
<dbReference type="CDD" id="cd14119">
    <property type="entry name" value="STKc_LKB1"/>
    <property type="match status" value="1"/>
</dbReference>
<dbReference type="FunFam" id="1.10.510.10:FF:000245">
    <property type="entry name" value="serine/threonine-protein kinase STK11"/>
    <property type="match status" value="1"/>
</dbReference>
<dbReference type="FunFam" id="3.30.200.20:FF:000235">
    <property type="entry name" value="serine/threonine-protein kinase STK11"/>
    <property type="match status" value="1"/>
</dbReference>
<dbReference type="Gene3D" id="3.30.200.20">
    <property type="entry name" value="Phosphorylase Kinase, domain 1"/>
    <property type="match status" value="1"/>
</dbReference>
<dbReference type="Gene3D" id="1.10.510.10">
    <property type="entry name" value="Transferase(Phosphotransferase) domain 1"/>
    <property type="match status" value="1"/>
</dbReference>
<dbReference type="InterPro" id="IPR011009">
    <property type="entry name" value="Kinase-like_dom_sf"/>
</dbReference>
<dbReference type="InterPro" id="IPR039154">
    <property type="entry name" value="LKB1_c"/>
</dbReference>
<dbReference type="InterPro" id="IPR000719">
    <property type="entry name" value="Prot_kinase_dom"/>
</dbReference>
<dbReference type="InterPro" id="IPR017441">
    <property type="entry name" value="Protein_kinase_ATP_BS"/>
</dbReference>
<dbReference type="InterPro" id="IPR008271">
    <property type="entry name" value="Ser/Thr_kinase_AS"/>
</dbReference>
<dbReference type="PANTHER" id="PTHR24346">
    <property type="entry name" value="MAP/MICROTUBULE AFFINITY-REGULATING KINASE"/>
    <property type="match status" value="1"/>
</dbReference>
<dbReference type="PANTHER" id="PTHR24346:SF94">
    <property type="entry name" value="NON-SPECIFIC SERINE_THREONINE PROTEIN KINASE"/>
    <property type="match status" value="1"/>
</dbReference>
<dbReference type="Pfam" id="PF00069">
    <property type="entry name" value="Pkinase"/>
    <property type="match status" value="1"/>
</dbReference>
<dbReference type="SMART" id="SM00220">
    <property type="entry name" value="S_TKc"/>
    <property type="match status" value="1"/>
</dbReference>
<dbReference type="SUPFAM" id="SSF56112">
    <property type="entry name" value="Protein kinase-like (PK-like)"/>
    <property type="match status" value="1"/>
</dbReference>
<dbReference type="PROSITE" id="PS00107">
    <property type="entry name" value="PROTEIN_KINASE_ATP"/>
    <property type="match status" value="1"/>
</dbReference>
<dbReference type="PROSITE" id="PS50011">
    <property type="entry name" value="PROTEIN_KINASE_DOM"/>
    <property type="match status" value="1"/>
</dbReference>
<dbReference type="PROSITE" id="PS00108">
    <property type="entry name" value="PROTEIN_KINASE_ST"/>
    <property type="match status" value="1"/>
</dbReference>
<comment type="function">
    <text evidence="1">Tumor suppressor serine/threonine-protein kinase that controls the activity of AMP-activated protein kinase (AMPK) family members, thereby playing a role in various processes such as cell metabolism, cell polarity, apoptosis and DNA damage response. Acts by phosphorylating the T-loop of AMPK family proteins, leading to promote their activity (By similarity).</text>
</comment>
<comment type="catalytic activity">
    <reaction evidence="2">
        <text>L-seryl-[protein] + ATP = O-phospho-L-seryl-[protein] + ADP + H(+)</text>
        <dbReference type="Rhea" id="RHEA:17989"/>
        <dbReference type="Rhea" id="RHEA-COMP:9863"/>
        <dbReference type="Rhea" id="RHEA-COMP:11604"/>
        <dbReference type="ChEBI" id="CHEBI:15378"/>
        <dbReference type="ChEBI" id="CHEBI:29999"/>
        <dbReference type="ChEBI" id="CHEBI:30616"/>
        <dbReference type="ChEBI" id="CHEBI:83421"/>
        <dbReference type="ChEBI" id="CHEBI:456216"/>
        <dbReference type="EC" id="2.7.11.1"/>
    </reaction>
</comment>
<comment type="catalytic activity">
    <reaction evidence="2">
        <text>L-threonyl-[protein] + ATP = O-phospho-L-threonyl-[protein] + ADP + H(+)</text>
        <dbReference type="Rhea" id="RHEA:46608"/>
        <dbReference type="Rhea" id="RHEA-COMP:11060"/>
        <dbReference type="Rhea" id="RHEA-COMP:11605"/>
        <dbReference type="ChEBI" id="CHEBI:15378"/>
        <dbReference type="ChEBI" id="CHEBI:30013"/>
        <dbReference type="ChEBI" id="CHEBI:30616"/>
        <dbReference type="ChEBI" id="CHEBI:61977"/>
        <dbReference type="ChEBI" id="CHEBI:456216"/>
        <dbReference type="EC" id="2.7.11.1"/>
    </reaction>
</comment>
<comment type="cofactor">
    <cofactor evidence="1">
        <name>Mg(2+)</name>
        <dbReference type="ChEBI" id="CHEBI:18420"/>
    </cofactor>
    <cofactor evidence="1">
        <name>Mn(2+)</name>
        <dbReference type="ChEBI" id="CHEBI:29035"/>
    </cofactor>
</comment>
<comment type="subunit">
    <text evidence="1">Catalytic component of a trimeric complex composed of STK11/LKB1, STRAD (STRADA or STRADB) and CAB39/MO25 (CAB39/MO25alpha or CAB39L/MO25beta).</text>
</comment>
<comment type="subcellular location">
    <subcellularLocation>
        <location evidence="1">Nucleus</location>
    </subcellularLocation>
    <subcellularLocation>
        <location evidence="7">Cytoplasm</location>
    </subcellularLocation>
</comment>
<comment type="tissue specificity">
    <text>Oocytes, eggs and early embryos.</text>
</comment>
<comment type="developmental stage">
    <text>Its expression peaks in the oocyte and unfertilized egg, begins to decrease gradually after fertilization, and disappears during the gastrulation stage.</text>
</comment>
<comment type="PTM">
    <text evidence="7">Phosphorylated by a cAMP-dependent protein kinase. Autophosphorylated in a reaction that prefers Mn(2+) to Mg(2+).</text>
</comment>
<comment type="similarity">
    <text evidence="8">Belongs to the protein kinase superfamily. CAMK Ser/Thr protein kinase family. LKB1 subfamily.</text>
</comment>
<accession>Q91604</accession>
<accession>Q6DE91</accession>
<sequence>MLCPSSMDEEGSEEIGFLGDLSVGMDTFIHRIDSTEVIYQPRRKRAKLVGKYLMGDLLGEGSYGKVKEMLDSDTLCRRAVKILKKKKLRRIPNGEANVKKEIQLLRRLRHRNVIQLVDVLYNEEKQKMYMVMEYCVCGMQEMLDSVQDKHFPVFQAHGYFCQLIDGLEYLHSQGIVHKDIKPGNLLLTTDGTLKISDLGVAEALHPFAEGDTCRTSQGSPAFQPPEIANGLDTFSGFKVDIWSAGVTLYNITTGLYPFEGDNIYKLFENIGKGDYSIPEECGPLLSDLLRGMLEYDPAKRFSIQQIRQHNWFRKKHPHMDPIVPIPPSPETKDRWRSLTVVPYLEDLHGYSEEEDLCDFEDDIIYTQDFTVPGQVAEDDYFAQTQSTAPSKQLCMNGTESQLKTERRVSSSSQRKASTTGSKVRKLSACKQQ</sequence>
<reference key="1">
    <citation type="journal article" date="1996" name="J. Biol. Chem.">
        <title>Cloning and characterization of a novel serine/threonine protein kinase expressed in early Xenopus embryos.</title>
        <authorList>
            <person name="Su J.Y."/>
            <person name="Erikson E."/>
            <person name="Maller J.L."/>
        </authorList>
    </citation>
    <scope>NUCLEOTIDE SEQUENCE [MRNA]</scope>
    <scope>PHOSPHORYLATION AT THR-192</scope>
    <scope>MUTAGENESIS OF LYS-81 AND THR-192</scope>
    <scope>SUBCELLULAR LOCATION</scope>
    <source>
        <tissue>Ovary</tissue>
    </source>
</reference>
<reference key="2">
    <citation type="submission" date="2004-07" db="EMBL/GenBank/DDBJ databases">
        <authorList>
            <consortium name="NIH - Xenopus Gene Collection (XGC) project"/>
        </authorList>
    </citation>
    <scope>NUCLEOTIDE SEQUENCE [LARGE SCALE MRNA]</scope>
    <source>
        <tissue>Ovary</tissue>
    </source>
</reference>
<evidence type="ECO:0000250" key="1"/>
<evidence type="ECO:0000250" key="2">
    <source>
        <dbReference type="UniProtKB" id="Q15831"/>
    </source>
</evidence>
<evidence type="ECO:0000255" key="3"/>
<evidence type="ECO:0000255" key="4">
    <source>
        <dbReference type="PROSITE-ProRule" id="PRU00159"/>
    </source>
</evidence>
<evidence type="ECO:0000255" key="5">
    <source>
        <dbReference type="PROSITE-ProRule" id="PRU10027"/>
    </source>
</evidence>
<evidence type="ECO:0000256" key="6">
    <source>
        <dbReference type="SAM" id="MobiDB-lite"/>
    </source>
</evidence>
<evidence type="ECO:0000269" key="7">
    <source>
    </source>
</evidence>
<evidence type="ECO:0000305" key="8"/>
<gene>
    <name evidence="2" type="primary">stk11</name>
    <name type="synonym">eek1</name>
</gene>
<protein>
    <recommendedName>
        <fullName evidence="2">Serine/threonine-protein kinase stk11</fullName>
        <ecNumber evidence="2">2.7.11.1</ecNumber>
    </recommendedName>
    <alternativeName>
        <fullName>Liver kinase B1 homolog</fullName>
        <shortName>lkb1</shortName>
    </alternativeName>
    <alternativeName>
        <fullName>Serine/threonine-protein kinase XEEK1</fullName>
    </alternativeName>
</protein>